<feature type="chain" id="PRO_0000266034" description="NUT family member 2G">
    <location>
        <begin position="1"/>
        <end position="741"/>
    </location>
</feature>
<feature type="region of interest" description="Disordered" evidence="1">
    <location>
        <begin position="172"/>
        <end position="200"/>
    </location>
</feature>
<feature type="region of interest" description="Disordered" evidence="1">
    <location>
        <begin position="293"/>
        <end position="375"/>
    </location>
</feature>
<feature type="region of interest" description="Disordered" evidence="1">
    <location>
        <begin position="391"/>
        <end position="424"/>
    </location>
</feature>
<feature type="region of interest" description="Disordered" evidence="1">
    <location>
        <begin position="496"/>
        <end position="624"/>
    </location>
</feature>
<feature type="region of interest" description="Disordered" evidence="1">
    <location>
        <begin position="638"/>
        <end position="741"/>
    </location>
</feature>
<feature type="compositionally biased region" description="Pro residues" evidence="1">
    <location>
        <begin position="304"/>
        <end position="321"/>
    </location>
</feature>
<feature type="compositionally biased region" description="Basic and acidic residues" evidence="1">
    <location>
        <begin position="402"/>
        <end position="412"/>
    </location>
</feature>
<feature type="compositionally biased region" description="Polar residues" evidence="1">
    <location>
        <begin position="528"/>
        <end position="545"/>
    </location>
</feature>
<feature type="compositionally biased region" description="Low complexity" evidence="1">
    <location>
        <begin position="639"/>
        <end position="650"/>
    </location>
</feature>
<feature type="compositionally biased region" description="Basic residues" evidence="1">
    <location>
        <begin position="731"/>
        <end position="741"/>
    </location>
</feature>
<feature type="splice variant" id="VSP_034023" description="In isoform 2." evidence="2">
    <original>LVEKRLLSLKEK</original>
    <variation>GAPSDALGTDRC</variation>
    <location>
        <begin position="481"/>
        <end position="492"/>
    </location>
</feature>
<feature type="splice variant" id="VSP_034024" description="In isoform 2." evidence="2">
    <location>
        <begin position="493"/>
        <end position="741"/>
    </location>
</feature>
<organism>
    <name type="scientific">Homo sapiens</name>
    <name type="common">Human</name>
    <dbReference type="NCBI Taxonomy" id="9606"/>
    <lineage>
        <taxon>Eukaryota</taxon>
        <taxon>Metazoa</taxon>
        <taxon>Chordata</taxon>
        <taxon>Craniata</taxon>
        <taxon>Vertebrata</taxon>
        <taxon>Euteleostomi</taxon>
        <taxon>Mammalia</taxon>
        <taxon>Eutheria</taxon>
        <taxon>Euarchontoglires</taxon>
        <taxon>Primates</taxon>
        <taxon>Haplorrhini</taxon>
        <taxon>Catarrhini</taxon>
        <taxon>Hominidae</taxon>
        <taxon>Homo</taxon>
    </lineage>
</organism>
<protein>
    <recommendedName>
        <fullName>NUT family member 2G</fullName>
    </recommendedName>
</protein>
<gene>
    <name type="primary">NUTM2G</name>
    <name type="synonym">FAM22G</name>
</gene>
<reference key="1">
    <citation type="journal article" date="2004" name="Nature">
        <title>DNA sequence and analysis of human chromosome 9.</title>
        <authorList>
            <person name="Humphray S.J."/>
            <person name="Oliver K."/>
            <person name="Hunt A.R."/>
            <person name="Plumb R.W."/>
            <person name="Loveland J.E."/>
            <person name="Howe K.L."/>
            <person name="Andrews T.D."/>
            <person name="Searle S."/>
            <person name="Hunt S.E."/>
            <person name="Scott C.E."/>
            <person name="Jones M.C."/>
            <person name="Ainscough R."/>
            <person name="Almeida J.P."/>
            <person name="Ambrose K.D."/>
            <person name="Ashwell R.I.S."/>
            <person name="Babbage A.K."/>
            <person name="Babbage S."/>
            <person name="Bagguley C.L."/>
            <person name="Bailey J."/>
            <person name="Banerjee R."/>
            <person name="Barker D.J."/>
            <person name="Barlow K.F."/>
            <person name="Bates K."/>
            <person name="Beasley H."/>
            <person name="Beasley O."/>
            <person name="Bird C.P."/>
            <person name="Bray-Allen S."/>
            <person name="Brown A.J."/>
            <person name="Brown J.Y."/>
            <person name="Burford D."/>
            <person name="Burrill W."/>
            <person name="Burton J."/>
            <person name="Carder C."/>
            <person name="Carter N.P."/>
            <person name="Chapman J.C."/>
            <person name="Chen Y."/>
            <person name="Clarke G."/>
            <person name="Clark S.Y."/>
            <person name="Clee C.M."/>
            <person name="Clegg S."/>
            <person name="Collier R.E."/>
            <person name="Corby N."/>
            <person name="Crosier M."/>
            <person name="Cummings A.T."/>
            <person name="Davies J."/>
            <person name="Dhami P."/>
            <person name="Dunn M."/>
            <person name="Dutta I."/>
            <person name="Dyer L.W."/>
            <person name="Earthrowl M.E."/>
            <person name="Faulkner L."/>
            <person name="Fleming C.J."/>
            <person name="Frankish A."/>
            <person name="Frankland J.A."/>
            <person name="French L."/>
            <person name="Fricker D.G."/>
            <person name="Garner P."/>
            <person name="Garnett J."/>
            <person name="Ghori J."/>
            <person name="Gilbert J.G.R."/>
            <person name="Glison C."/>
            <person name="Grafham D.V."/>
            <person name="Gribble S."/>
            <person name="Griffiths C."/>
            <person name="Griffiths-Jones S."/>
            <person name="Grocock R."/>
            <person name="Guy J."/>
            <person name="Hall R.E."/>
            <person name="Hammond S."/>
            <person name="Harley J.L."/>
            <person name="Harrison E.S.I."/>
            <person name="Hart E.A."/>
            <person name="Heath P.D."/>
            <person name="Henderson C.D."/>
            <person name="Hopkins B.L."/>
            <person name="Howard P.J."/>
            <person name="Howden P.J."/>
            <person name="Huckle E."/>
            <person name="Johnson C."/>
            <person name="Johnson D."/>
            <person name="Joy A.A."/>
            <person name="Kay M."/>
            <person name="Keenan S."/>
            <person name="Kershaw J.K."/>
            <person name="Kimberley A.M."/>
            <person name="King A."/>
            <person name="Knights A."/>
            <person name="Laird G.K."/>
            <person name="Langford C."/>
            <person name="Lawlor S."/>
            <person name="Leongamornlert D.A."/>
            <person name="Leversha M."/>
            <person name="Lloyd C."/>
            <person name="Lloyd D.M."/>
            <person name="Lovell J."/>
            <person name="Martin S."/>
            <person name="Mashreghi-Mohammadi M."/>
            <person name="Matthews L."/>
            <person name="McLaren S."/>
            <person name="McLay K.E."/>
            <person name="McMurray A."/>
            <person name="Milne S."/>
            <person name="Nickerson T."/>
            <person name="Nisbett J."/>
            <person name="Nordsiek G."/>
            <person name="Pearce A.V."/>
            <person name="Peck A.I."/>
            <person name="Porter K.M."/>
            <person name="Pandian R."/>
            <person name="Pelan S."/>
            <person name="Phillimore B."/>
            <person name="Povey S."/>
            <person name="Ramsey Y."/>
            <person name="Rand V."/>
            <person name="Scharfe M."/>
            <person name="Sehra H.K."/>
            <person name="Shownkeen R."/>
            <person name="Sims S.K."/>
            <person name="Skuce C.D."/>
            <person name="Smith M."/>
            <person name="Steward C.A."/>
            <person name="Swarbreck D."/>
            <person name="Sycamore N."/>
            <person name="Tester J."/>
            <person name="Thorpe A."/>
            <person name="Tracey A."/>
            <person name="Tromans A."/>
            <person name="Thomas D.W."/>
            <person name="Wall M."/>
            <person name="Wallis J.M."/>
            <person name="West A.P."/>
            <person name="Whitehead S.L."/>
            <person name="Willey D.L."/>
            <person name="Williams S.A."/>
            <person name="Wilming L."/>
            <person name="Wray P.W."/>
            <person name="Young L."/>
            <person name="Ashurst J.L."/>
            <person name="Coulson A."/>
            <person name="Blocker H."/>
            <person name="Durbin R.M."/>
            <person name="Sulston J.E."/>
            <person name="Hubbard T."/>
            <person name="Jackson M.J."/>
            <person name="Bentley D.R."/>
            <person name="Beck S."/>
            <person name="Rogers J."/>
            <person name="Dunham I."/>
        </authorList>
    </citation>
    <scope>NUCLEOTIDE SEQUENCE [LARGE SCALE GENOMIC DNA]</scope>
</reference>
<evidence type="ECO:0000256" key="1">
    <source>
        <dbReference type="SAM" id="MobiDB-lite"/>
    </source>
</evidence>
<evidence type="ECO:0000305" key="2"/>
<accession>Q5VZR2</accession>
<accession>A6NNI5</accession>
<accession>Q5VZR3</accession>
<keyword id="KW-0025">Alternative splicing</keyword>
<keyword id="KW-1185">Reference proteome</keyword>
<comment type="alternative products">
    <event type="alternative splicing"/>
    <isoform>
        <id>Q5VZR2-1</id>
        <name>1</name>
        <sequence type="displayed"/>
    </isoform>
    <isoform>
        <id>Q5VZR2-2</id>
        <name>2</name>
        <sequence type="described" ref="VSP_034023 VSP_034024"/>
    </isoform>
</comment>
<comment type="similarity">
    <text evidence="2">Belongs to the NUT family.</text>
</comment>
<proteinExistence type="inferred from homology"/>
<sequence length="741" mass="79011">MASNGAYPVLGPGVTVNPGTSLSVFTALPFATPSPGPTHRPPLVTAVVPPAGPLVLSAFPSTPLVAGQDGRGPSGAGASNVFVQMRTEVGPVKPPQAQTLILTQAPLVWQAPGTLCGGVMCPPPLLLAAAPGVPVTSAQVVGGTQACEGGWSHGLPLPPPPPAAQVAPIVSPGNAGPWPQGAHGEGSLAPSQAKARPDDSCKPKSVYENFRLWQHYKPLARRHLPQSPDTEALSCFLIPVLRSLARRKPTMTLEEGLWRAMREWQHTSNFDRMIFYEMAAKFLEFEAEEEMQIQKSQWMKGPQSLPPPAPPRLEPRGPPAPEVVKQPVYLPSKDGPKAPTACLPPPRPQRPAETKAHLPPPRPPRPAETKVPEEIPPEVVQEYVDIMEELLGSHPGDTGEPEGQREKGKVEQPQEEDGMTSDPGLLSYIDKLCSQEDFVTKVEAVIHPRFLEELLSPDPQMDFLALSQELEQEEGLTLAQLVEKRLLSLKEKGCGRAAPRHGTARLDSSPSEFAAGQEAAREVPDPQQRVSVETSPPQTAAQDPQGQGRVRTGMARSEDPAVLLGCQDSPRLKAVRPTSPPQDHRPTCPGLGTKDALGLPGESPVKESHGLAKGSSEETELPGMVYVVGSHHRLRPWRLSQSPVPSSGLLSPGGRGPQGALQSPSAQKRGLSPSPSPASKSKKRPLFGSPSPAEKTPHPGPGLRVSGEQSLAWGLGGPSQSQKRKGDPLASRRKKKRHCSQ</sequence>
<name>NTM2G_HUMAN</name>
<dbReference type="EMBL" id="AL158827">
    <property type="status" value="NOT_ANNOTATED_CDS"/>
    <property type="molecule type" value="Genomic_DNA"/>
</dbReference>
<dbReference type="CCDS" id="CCDS43854.1">
    <molecule id="Q5VZR2-2"/>
</dbReference>
<dbReference type="CCDS" id="CCDS55329.1">
    <molecule id="Q5VZR2-1"/>
</dbReference>
<dbReference type="RefSeq" id="NP_001038942.1">
    <molecule id="Q5VZR2-2"/>
    <property type="nucleotide sequence ID" value="NM_001045477.4"/>
</dbReference>
<dbReference type="RefSeq" id="NP_001164212.1">
    <molecule id="Q5VZR2-1"/>
    <property type="nucleotide sequence ID" value="NM_001170741.3"/>
</dbReference>
<dbReference type="SMR" id="Q5VZR2"/>
<dbReference type="BioGRID" id="137488">
    <property type="interactions" value="1"/>
</dbReference>
<dbReference type="STRING" id="9606.ENSP00000361397"/>
<dbReference type="GlyGen" id="Q5VZR2">
    <property type="glycosylation" value="1 site"/>
</dbReference>
<dbReference type="iPTMnet" id="Q5VZR2"/>
<dbReference type="PhosphoSitePlus" id="Q5VZR2"/>
<dbReference type="BioMuta" id="NUTM2G"/>
<dbReference type="DMDM" id="190358885"/>
<dbReference type="jPOST" id="Q5VZR2"/>
<dbReference type="MassIVE" id="Q5VZR2"/>
<dbReference type="PaxDb" id="9606-ENSP00000361397"/>
<dbReference type="PeptideAtlas" id="Q5VZR2"/>
<dbReference type="Antibodypedia" id="59068">
    <property type="antibodies" value="1 antibodies from 1 providers"/>
</dbReference>
<dbReference type="DNASU" id="441457"/>
<dbReference type="Ensembl" id="ENST00000354649.7">
    <molecule id="Q5VZR2-2"/>
    <property type="protein sequence ID" value="ENSP00000346670.2"/>
    <property type="gene ID" value="ENSG00000188152.13"/>
</dbReference>
<dbReference type="Ensembl" id="ENST00000372322.4">
    <molecule id="Q5VZR2-1"/>
    <property type="protein sequence ID" value="ENSP00000361397.3"/>
    <property type="gene ID" value="ENSG00000188152.13"/>
</dbReference>
<dbReference type="GeneID" id="441457"/>
<dbReference type="KEGG" id="hsa:441457"/>
<dbReference type="MANE-Select" id="ENST00000372322.4">
    <property type="protein sequence ID" value="ENSP00000361397.3"/>
    <property type="RefSeq nucleotide sequence ID" value="NM_001170741.3"/>
    <property type="RefSeq protein sequence ID" value="NP_001164212.1"/>
</dbReference>
<dbReference type="UCSC" id="uc004awq.3">
    <molecule id="Q5VZR2-1"/>
    <property type="organism name" value="human"/>
</dbReference>
<dbReference type="AGR" id="HGNC:23449"/>
<dbReference type="CTD" id="441457"/>
<dbReference type="GeneCards" id="NUTM2G"/>
<dbReference type="HGNC" id="HGNC:23449">
    <property type="gene designation" value="NUTM2G"/>
</dbReference>
<dbReference type="HPA" id="ENSG00000188152">
    <property type="expression patterns" value="Tissue enhanced (testis)"/>
</dbReference>
<dbReference type="neXtProt" id="NX_Q5VZR2"/>
<dbReference type="OpenTargets" id="ENSG00000188152"/>
<dbReference type="PharmGKB" id="PA134899635"/>
<dbReference type="VEuPathDB" id="HostDB:ENSG00000188152"/>
<dbReference type="eggNOG" id="ENOG502RU0F">
    <property type="taxonomic scope" value="Eukaryota"/>
</dbReference>
<dbReference type="GeneTree" id="ENSGT00410000025793"/>
<dbReference type="HOGENOM" id="CLU_035677_0_0_1"/>
<dbReference type="InParanoid" id="Q5VZR2"/>
<dbReference type="OMA" id="DPWGNSP"/>
<dbReference type="OrthoDB" id="9536791at2759"/>
<dbReference type="PAN-GO" id="Q5VZR2">
    <property type="GO annotations" value="0 GO annotations based on evolutionary models"/>
</dbReference>
<dbReference type="PhylomeDB" id="Q5VZR2"/>
<dbReference type="TreeFam" id="TF337728"/>
<dbReference type="PathwayCommons" id="Q5VZR2"/>
<dbReference type="BioGRID-ORCS" id="441457">
    <property type="hits" value="12 hits in 1040 CRISPR screens"/>
</dbReference>
<dbReference type="GenomeRNAi" id="441457"/>
<dbReference type="Pharos" id="Q5VZR2">
    <property type="development level" value="Tdark"/>
</dbReference>
<dbReference type="PRO" id="PR:Q5VZR2"/>
<dbReference type="Proteomes" id="UP000005640">
    <property type="component" value="Chromosome 9"/>
</dbReference>
<dbReference type="RNAct" id="Q5VZR2">
    <property type="molecule type" value="protein"/>
</dbReference>
<dbReference type="Bgee" id="ENSG00000188152">
    <property type="expression patterns" value="Expressed in male germ line stem cell (sensu Vertebrata) in testis and 101 other cell types or tissues"/>
</dbReference>
<dbReference type="InterPro" id="IPR024310">
    <property type="entry name" value="NUT"/>
</dbReference>
<dbReference type="InterPro" id="IPR024309">
    <property type="entry name" value="NUT_N"/>
</dbReference>
<dbReference type="PANTHER" id="PTHR22879">
    <property type="entry name" value="NUT FAMILY MEMBER 1"/>
    <property type="match status" value="1"/>
</dbReference>
<dbReference type="PANTHER" id="PTHR22879:SF2">
    <property type="entry name" value="NUT FAMILY MEMBER 2F-RELATED"/>
    <property type="match status" value="1"/>
</dbReference>
<dbReference type="Pfam" id="PF12881">
    <property type="entry name" value="NUT"/>
    <property type="match status" value="1"/>
</dbReference>